<sequence>MQRSRASSTSSGRLQASQQVQPLDAPKIIVIHPGSQHLRIGRACDLNPLTMLHAVAYKRKHQEGDWPYHDPMLPSLDNINPAQLQVEFEEQRLIASRILQNCVIDDKQRLRVATPPQQLAHFNRKSVAEKIPPPGNLSEERNRQWLDRDAPVLFDEQILRLSTFDARDYDIHFPIQRGELNVHKQKGGSLQCTLQHIERIWSYALEARLKINLRDLRTHSAVLVVNDVYVRRHLREFMTLLLQRLGFQRCFLVQDSVASTYGAGIGFGCVVDIGAQKTSIACIEDGISQLNSRVRLQYGGGDINQVLLMLLRKCGFPYRECSVQDSYVDARLMDKLKERFCHLNAKVCGAQEKQFHLRKQNGQWLRYTLQVGDEAIMAPLAFFHTELLNITGKARKAFTQQPPQEQYDCEDCFDAEYLRETGRKNGARAADPIVAQLLAQPRPLPPITADDEELNVVDQDEPSSNGVAVHNTSSPSVGHAQKHFADTANGVYQYGQGQVMPLDQAVLEAIGRCATNETKRKMYGSILLVGSSVKIPGLAAWLQSCISQQVQPGTEVNVFTKGMDAGMVAWKGAAIMSVLESARELWITQVDWSRHGLRLLRERSPFLW</sequence>
<evidence type="ECO:0000250" key="1"/>
<evidence type="ECO:0000250" key="2">
    <source>
        <dbReference type="UniProtKB" id="Q9VX09"/>
    </source>
</evidence>
<evidence type="ECO:0000256" key="3">
    <source>
        <dbReference type="SAM" id="MobiDB-lite"/>
    </source>
</evidence>
<evidence type="ECO:0000305" key="4"/>
<accession>Q29G73</accession>
<keyword id="KW-0067">ATP-binding</keyword>
<keyword id="KW-0227">DNA damage</keyword>
<keyword id="KW-0233">DNA recombination</keyword>
<keyword id="KW-0234">DNA repair</keyword>
<keyword id="KW-0547">Nucleotide-binding</keyword>
<keyword id="KW-0539">Nucleus</keyword>
<keyword id="KW-1185">Reference proteome</keyword>
<keyword id="KW-0804">Transcription</keyword>
<keyword id="KW-0805">Transcription regulation</keyword>
<proteinExistence type="inferred from homology"/>
<protein>
    <recommendedName>
        <fullName>Actin-related protein 8</fullName>
    </recommendedName>
</protein>
<dbReference type="EMBL" id="CH379064">
    <property type="protein sequence ID" value="EAL32237.2"/>
    <property type="molecule type" value="Genomic_DNA"/>
</dbReference>
<dbReference type="SMR" id="Q29G73"/>
<dbReference type="FunCoup" id="Q29G73">
    <property type="interactions" value="2141"/>
</dbReference>
<dbReference type="STRING" id="46245.Q29G73"/>
<dbReference type="eggNOG" id="KOG0797">
    <property type="taxonomic scope" value="Eukaryota"/>
</dbReference>
<dbReference type="HOGENOM" id="CLU_006974_1_0_1"/>
<dbReference type="InParanoid" id="Q29G73"/>
<dbReference type="OMA" id="AYKCMWA"/>
<dbReference type="Proteomes" id="UP000001819">
    <property type="component" value="Unplaced"/>
</dbReference>
<dbReference type="GO" id="GO:0005634">
    <property type="term" value="C:nucleus"/>
    <property type="evidence" value="ECO:0007669"/>
    <property type="project" value="UniProtKB-SubCell"/>
</dbReference>
<dbReference type="GO" id="GO:0005524">
    <property type="term" value="F:ATP binding"/>
    <property type="evidence" value="ECO:0007669"/>
    <property type="project" value="UniProtKB-KW"/>
</dbReference>
<dbReference type="GO" id="GO:0006338">
    <property type="term" value="P:chromatin remodeling"/>
    <property type="evidence" value="ECO:0000250"/>
    <property type="project" value="UniProtKB"/>
</dbReference>
<dbReference type="GO" id="GO:0006310">
    <property type="term" value="P:DNA recombination"/>
    <property type="evidence" value="ECO:0007669"/>
    <property type="project" value="UniProtKB-KW"/>
</dbReference>
<dbReference type="GO" id="GO:0006281">
    <property type="term" value="P:DNA repair"/>
    <property type="evidence" value="ECO:0007669"/>
    <property type="project" value="UniProtKB-KW"/>
</dbReference>
<dbReference type="GO" id="GO:0006355">
    <property type="term" value="P:regulation of DNA-templated transcription"/>
    <property type="evidence" value="ECO:0000250"/>
    <property type="project" value="UniProtKB"/>
</dbReference>
<dbReference type="CDD" id="cd10206">
    <property type="entry name" value="ASKHA_NBD_Arp8-like"/>
    <property type="match status" value="1"/>
</dbReference>
<dbReference type="Gene3D" id="3.30.420.40">
    <property type="match status" value="2"/>
</dbReference>
<dbReference type="Gene3D" id="3.90.640.10">
    <property type="entry name" value="Actin, Chain A, domain 4"/>
    <property type="match status" value="1"/>
</dbReference>
<dbReference type="InterPro" id="IPR004000">
    <property type="entry name" value="Actin"/>
</dbReference>
<dbReference type="InterPro" id="IPR043129">
    <property type="entry name" value="ATPase_NBD"/>
</dbReference>
<dbReference type="PANTHER" id="PTHR11937">
    <property type="entry name" value="ACTIN"/>
    <property type="match status" value="1"/>
</dbReference>
<dbReference type="Pfam" id="PF00022">
    <property type="entry name" value="Actin"/>
    <property type="match status" value="1"/>
</dbReference>
<dbReference type="SMART" id="SM00268">
    <property type="entry name" value="ACTIN"/>
    <property type="match status" value="1"/>
</dbReference>
<dbReference type="SUPFAM" id="SSF53067">
    <property type="entry name" value="Actin-like ATPase domain"/>
    <property type="match status" value="2"/>
</dbReference>
<reference key="1">
    <citation type="journal article" date="2005" name="Genome Res.">
        <title>Comparative genome sequencing of Drosophila pseudoobscura: chromosomal, gene, and cis-element evolution.</title>
        <authorList>
            <person name="Richards S."/>
            <person name="Liu Y."/>
            <person name="Bettencourt B.R."/>
            <person name="Hradecky P."/>
            <person name="Letovsky S."/>
            <person name="Nielsen R."/>
            <person name="Thornton K."/>
            <person name="Hubisz M.J."/>
            <person name="Chen R."/>
            <person name="Meisel R.P."/>
            <person name="Couronne O."/>
            <person name="Hua S."/>
            <person name="Smith M.A."/>
            <person name="Zhang P."/>
            <person name="Liu J."/>
            <person name="Bussemaker H.J."/>
            <person name="van Batenburg M.F."/>
            <person name="Howells S.L."/>
            <person name="Scherer S.E."/>
            <person name="Sodergren E."/>
            <person name="Matthews B.B."/>
            <person name="Crosby M.A."/>
            <person name="Schroeder A.J."/>
            <person name="Ortiz-Barrientos D."/>
            <person name="Rives C.M."/>
            <person name="Metzker M.L."/>
            <person name="Muzny D.M."/>
            <person name="Scott G."/>
            <person name="Steffen D."/>
            <person name="Wheeler D.A."/>
            <person name="Worley K.C."/>
            <person name="Havlak P."/>
            <person name="Durbin K.J."/>
            <person name="Egan A."/>
            <person name="Gill R."/>
            <person name="Hume J."/>
            <person name="Morgan M.B."/>
            <person name="Miner G."/>
            <person name="Hamilton C."/>
            <person name="Huang Y."/>
            <person name="Waldron L."/>
            <person name="Verduzco D."/>
            <person name="Clerc-Blankenburg K.P."/>
            <person name="Dubchak I."/>
            <person name="Noor M.A.F."/>
            <person name="Anderson W."/>
            <person name="White K.P."/>
            <person name="Clark A.G."/>
            <person name="Schaeffer S.W."/>
            <person name="Gelbart W.M."/>
            <person name="Weinstock G.M."/>
            <person name="Gibbs R.A."/>
        </authorList>
    </citation>
    <scope>NUCLEOTIDE SEQUENCE [LARGE SCALE GENOMIC DNA]</scope>
    <source>
        <strain>MV2-25 / Tucson 14011-0121.94</strain>
    </source>
</reference>
<name>ARP8_DROPS</name>
<organism>
    <name type="scientific">Drosophila pseudoobscura pseudoobscura</name>
    <name type="common">Fruit fly</name>
    <dbReference type="NCBI Taxonomy" id="46245"/>
    <lineage>
        <taxon>Eukaryota</taxon>
        <taxon>Metazoa</taxon>
        <taxon>Ecdysozoa</taxon>
        <taxon>Arthropoda</taxon>
        <taxon>Hexapoda</taxon>
        <taxon>Insecta</taxon>
        <taxon>Pterygota</taxon>
        <taxon>Neoptera</taxon>
        <taxon>Endopterygota</taxon>
        <taxon>Diptera</taxon>
        <taxon>Brachycera</taxon>
        <taxon>Muscomorpha</taxon>
        <taxon>Ephydroidea</taxon>
        <taxon>Drosophilidae</taxon>
        <taxon>Drosophila</taxon>
        <taxon>Sophophora</taxon>
    </lineage>
</organism>
<gene>
    <name evidence="2" type="primary">Arp8</name>
    <name type="ORF">GA20628</name>
</gene>
<comment type="function">
    <text evidence="1">Plays an important role in the functional organization of mitotic chromosomes. Exhibits low basal ATPase activity, and unable to polymerize (By similarity).</text>
</comment>
<comment type="function">
    <text evidence="1">Proposed core component of the chromatin remodeling INO80 complex which is involved in transcriptional regulation, DNA replication and probably DNA repair. Strongly prefer nucleosomes and H3-H4 tetramers over H2A-H2B dimers, suggesting it may act as a nucleosome recognition module within the complex (By similarity).</text>
</comment>
<comment type="subunit">
    <text evidence="1">Component of the chromatin remodeling Ino80 complex. Exists as monomers and dimers, but the dimer is most probably the biologically relevant form required for stable interactions with histones that exploits the twofold symmetry of the nucleosome core (By similarity).</text>
</comment>
<comment type="subcellular location">
    <subcellularLocation>
        <location evidence="2">Nucleus</location>
    </subcellularLocation>
</comment>
<comment type="similarity">
    <text evidence="4">Belongs to the actin family. ARP8 subfamily.</text>
</comment>
<feature type="chain" id="PRO_0000307120" description="Actin-related protein 8">
    <location>
        <begin position="1"/>
        <end position="608"/>
    </location>
</feature>
<feature type="region of interest" description="Disordered" evidence="3">
    <location>
        <begin position="1"/>
        <end position="20"/>
    </location>
</feature>
<feature type="binding site" evidence="1">
    <location>
        <begin position="272"/>
        <end position="275"/>
    </location>
    <ligand>
        <name>ATP</name>
        <dbReference type="ChEBI" id="CHEBI:30616"/>
    </ligand>
</feature>